<name>PYRK_LACLA</name>
<dbReference type="EMBL" id="AE005176">
    <property type="protein sequence ID" value="AAK05445.1"/>
    <property type="molecule type" value="Genomic_DNA"/>
</dbReference>
<dbReference type="PIR" id="C86793">
    <property type="entry name" value="C86793"/>
</dbReference>
<dbReference type="RefSeq" id="NP_267503.1">
    <property type="nucleotide sequence ID" value="NC_002662.1"/>
</dbReference>
<dbReference type="RefSeq" id="WP_003131096.1">
    <property type="nucleotide sequence ID" value="NC_002662.1"/>
</dbReference>
<dbReference type="PDB" id="5KSW">
    <property type="method" value="X-ray"/>
    <property type="resolution" value="2.47 A"/>
    <property type="chains" value="B/D=1-262"/>
</dbReference>
<dbReference type="PDB" id="5UE9">
    <property type="method" value="X-ray"/>
    <property type="resolution" value="2.72 A"/>
    <property type="chains" value="B/D=1-262"/>
</dbReference>
<dbReference type="PDBsum" id="5KSW"/>
<dbReference type="PDBsum" id="5UE9"/>
<dbReference type="SMR" id="Q9CFW7"/>
<dbReference type="PaxDb" id="272623-L183563"/>
<dbReference type="EnsemblBacteria" id="AAK05445">
    <property type="protein sequence ID" value="AAK05445"/>
    <property type="gene ID" value="L183563"/>
</dbReference>
<dbReference type="KEGG" id="lla:L183563"/>
<dbReference type="PATRIC" id="fig|272623.7.peg.1453"/>
<dbReference type="eggNOG" id="COG0543">
    <property type="taxonomic scope" value="Bacteria"/>
</dbReference>
<dbReference type="HOGENOM" id="CLU_003827_1_2_9"/>
<dbReference type="OrthoDB" id="9778346at2"/>
<dbReference type="BioCyc" id="MetaCyc:MONOMER-14472"/>
<dbReference type="SABIO-RK" id="Q9CFW7"/>
<dbReference type="UniPathway" id="UPA00070">
    <property type="reaction ID" value="UER00945"/>
</dbReference>
<dbReference type="Proteomes" id="UP000002196">
    <property type="component" value="Chromosome"/>
</dbReference>
<dbReference type="GO" id="GO:0051537">
    <property type="term" value="F:2 iron, 2 sulfur cluster binding"/>
    <property type="evidence" value="ECO:0007669"/>
    <property type="project" value="UniProtKB-KW"/>
</dbReference>
<dbReference type="GO" id="GO:0009055">
    <property type="term" value="F:electron transfer activity"/>
    <property type="evidence" value="ECO:0007669"/>
    <property type="project" value="UniProtKB-UniRule"/>
</dbReference>
<dbReference type="GO" id="GO:0050660">
    <property type="term" value="F:flavin adenine dinucleotide binding"/>
    <property type="evidence" value="ECO:0007669"/>
    <property type="project" value="InterPro"/>
</dbReference>
<dbReference type="GO" id="GO:0046872">
    <property type="term" value="F:metal ion binding"/>
    <property type="evidence" value="ECO:0007669"/>
    <property type="project" value="UniProtKB-KW"/>
</dbReference>
<dbReference type="GO" id="GO:0016491">
    <property type="term" value="F:oxidoreductase activity"/>
    <property type="evidence" value="ECO:0007669"/>
    <property type="project" value="InterPro"/>
</dbReference>
<dbReference type="GO" id="GO:0044205">
    <property type="term" value="P:'de novo' UMP biosynthetic process"/>
    <property type="evidence" value="ECO:0007669"/>
    <property type="project" value="UniProtKB-UniRule"/>
</dbReference>
<dbReference type="CDD" id="cd06218">
    <property type="entry name" value="DHOD_e_trans"/>
    <property type="match status" value="1"/>
</dbReference>
<dbReference type="FunFam" id="2.10.240.10:FF:000001">
    <property type="entry name" value="Dihydroorotate dehydrogenase B (NAD(+)), electron transfer subunit"/>
    <property type="match status" value="1"/>
</dbReference>
<dbReference type="Gene3D" id="2.10.240.10">
    <property type="entry name" value="Dihydroorotate dehydrogenase, electron transfer subunit"/>
    <property type="match status" value="1"/>
</dbReference>
<dbReference type="Gene3D" id="3.40.50.80">
    <property type="entry name" value="Nucleotide-binding domain of ferredoxin-NADP reductase (FNR) module"/>
    <property type="match status" value="1"/>
</dbReference>
<dbReference type="Gene3D" id="2.40.30.10">
    <property type="entry name" value="Translation factors"/>
    <property type="match status" value="1"/>
</dbReference>
<dbReference type="HAMAP" id="MF_01211">
    <property type="entry name" value="DHODB_Fe_S_bind"/>
    <property type="match status" value="1"/>
</dbReference>
<dbReference type="InterPro" id="IPR012165">
    <property type="entry name" value="Cyt_c3_hydrogenase_gsu"/>
</dbReference>
<dbReference type="InterPro" id="IPR037117">
    <property type="entry name" value="Dihydroorotate_DH_ele_sf"/>
</dbReference>
<dbReference type="InterPro" id="IPR019480">
    <property type="entry name" value="Dihydroorotate_DH_Fe-S-bd"/>
</dbReference>
<dbReference type="InterPro" id="IPR023455">
    <property type="entry name" value="Dihydroorotate_DHASE_ETsu"/>
</dbReference>
<dbReference type="InterPro" id="IPR017927">
    <property type="entry name" value="FAD-bd_FR_type"/>
</dbReference>
<dbReference type="InterPro" id="IPR039261">
    <property type="entry name" value="FNR_nucleotide-bd"/>
</dbReference>
<dbReference type="InterPro" id="IPR001433">
    <property type="entry name" value="OxRdtase_FAD/NAD-bd"/>
</dbReference>
<dbReference type="InterPro" id="IPR050353">
    <property type="entry name" value="PyrK_electron_transfer"/>
</dbReference>
<dbReference type="InterPro" id="IPR017938">
    <property type="entry name" value="Riboflavin_synthase-like_b-brl"/>
</dbReference>
<dbReference type="NCBIfam" id="NF000797">
    <property type="entry name" value="PRK00054.1-2"/>
    <property type="match status" value="1"/>
</dbReference>
<dbReference type="PANTHER" id="PTHR43513">
    <property type="entry name" value="DIHYDROOROTATE DEHYDROGENASE B (NAD(+)), ELECTRON TRANSFER SUBUNIT"/>
    <property type="match status" value="1"/>
</dbReference>
<dbReference type="PANTHER" id="PTHR43513:SF3">
    <property type="entry name" value="DIHYDROOROTATE DEHYDROGENASE B (NAD(+)), ELECTRON TRANSFER SUBUNIT-RELATED"/>
    <property type="match status" value="1"/>
</dbReference>
<dbReference type="Pfam" id="PF10418">
    <property type="entry name" value="DHODB_Fe-S_bind"/>
    <property type="match status" value="1"/>
</dbReference>
<dbReference type="Pfam" id="PF00175">
    <property type="entry name" value="NAD_binding_1"/>
    <property type="match status" value="1"/>
</dbReference>
<dbReference type="PIRSF" id="PIRSF006816">
    <property type="entry name" value="Cyc3_hyd_g"/>
    <property type="match status" value="1"/>
</dbReference>
<dbReference type="SUPFAM" id="SSF52343">
    <property type="entry name" value="Ferredoxin reductase-like, C-terminal NADP-linked domain"/>
    <property type="match status" value="1"/>
</dbReference>
<dbReference type="SUPFAM" id="SSF63380">
    <property type="entry name" value="Riboflavin synthase domain-like"/>
    <property type="match status" value="1"/>
</dbReference>
<dbReference type="PROSITE" id="PS51384">
    <property type="entry name" value="FAD_FR"/>
    <property type="match status" value="1"/>
</dbReference>
<evidence type="ECO:0000255" key="1">
    <source>
        <dbReference type="HAMAP-Rule" id="MF_01211"/>
    </source>
</evidence>
<evidence type="ECO:0007829" key="2">
    <source>
        <dbReference type="PDB" id="5KSW"/>
    </source>
</evidence>
<sequence length="262" mass="28832">MPKLQEMMTIVSQREVASNIFEMVLKGELVEEMDLPGQFLHLAVPNASMLLRRPISISSWDKVAKTCTILYRIGDETSGTYEISKLQSGAKIDVMGPLGNGFPVDEVVSTDKILIVGGGIGVPPLYELAKQLEEKNCQMTILLGFASEKVKILEKEFAELKNVSLKIATDDGSYGTKGHVGMLMEEIDFEVDALYTCGAPAMLKAVAKKYEQLERLYISMESRMACGIGACYACVEHDKEDENHALKVCEDGPVFLGKQLLL</sequence>
<accession>Q9CFW7</accession>
<comment type="function">
    <text evidence="1">Responsible for channeling the electrons from the oxidation of dihydroorotate from the FMN redox center in the PyrD type B subunit to the ultimate electron acceptor NAD(+).</text>
</comment>
<comment type="cofactor">
    <cofactor evidence="1">
        <name>[2Fe-2S] cluster</name>
        <dbReference type="ChEBI" id="CHEBI:190135"/>
    </cofactor>
    <text evidence="1">Binds 1 [2Fe-2S] cluster per subunit.</text>
</comment>
<comment type="cofactor">
    <cofactor evidence="1">
        <name>FAD</name>
        <dbReference type="ChEBI" id="CHEBI:57692"/>
    </cofactor>
    <text evidence="1">Binds 1 FAD per subunit.</text>
</comment>
<comment type="pathway">
    <text evidence="1">Pyrimidine metabolism; UMP biosynthesis via de novo pathway; orotate from (S)-dihydroorotate (NAD(+) route): step 1/1.</text>
</comment>
<comment type="subunit">
    <text evidence="1">Heterotetramer of 2 PyrK and 2 PyrD type B subunits.</text>
</comment>
<comment type="similarity">
    <text evidence="1">Belongs to the PyrK family.</text>
</comment>
<reference key="1">
    <citation type="journal article" date="2001" name="Genome Res.">
        <title>The complete genome sequence of the lactic acid bacterium Lactococcus lactis ssp. lactis IL1403.</title>
        <authorList>
            <person name="Bolotin A."/>
            <person name="Wincker P."/>
            <person name="Mauger S."/>
            <person name="Jaillon O."/>
            <person name="Malarme K."/>
            <person name="Weissenbach J."/>
            <person name="Ehrlich S.D."/>
            <person name="Sorokin A."/>
        </authorList>
    </citation>
    <scope>NUCLEOTIDE SEQUENCE [LARGE SCALE GENOMIC DNA]</scope>
    <source>
        <strain>IL1403</strain>
    </source>
</reference>
<gene>
    <name evidence="1" type="primary">pyrK</name>
    <name type="synonym">pyrZ</name>
    <name type="ordered locus">LL1347</name>
    <name type="ORF">L183563</name>
</gene>
<proteinExistence type="evidence at protein level"/>
<feature type="chain" id="PRO_0000148362" description="Dihydroorotate dehydrogenase B (NAD(+)), electron transfer subunit">
    <location>
        <begin position="1"/>
        <end position="262"/>
    </location>
</feature>
<feature type="domain" description="FAD-binding FR-type" evidence="1">
    <location>
        <begin position="3"/>
        <end position="104"/>
    </location>
</feature>
<feature type="binding site" evidence="1">
    <location>
        <begin position="53"/>
        <end position="56"/>
    </location>
    <ligand>
        <name>FAD</name>
        <dbReference type="ChEBI" id="CHEBI:57692"/>
    </ligand>
</feature>
<feature type="binding site" evidence="1">
    <location>
        <begin position="70"/>
        <end position="72"/>
    </location>
    <ligand>
        <name>FAD</name>
        <dbReference type="ChEBI" id="CHEBI:57692"/>
    </ligand>
</feature>
<feature type="binding site" evidence="1">
    <location>
        <begin position="79"/>
        <end position="80"/>
    </location>
    <ligand>
        <name>FAD</name>
        <dbReference type="ChEBI" id="CHEBI:57692"/>
    </ligand>
</feature>
<feature type="binding site" evidence="1">
    <location>
        <position position="226"/>
    </location>
    <ligand>
        <name>[2Fe-2S] cluster</name>
        <dbReference type="ChEBI" id="CHEBI:190135"/>
    </ligand>
</feature>
<feature type="binding site" evidence="1">
    <location>
        <position position="231"/>
    </location>
    <ligand>
        <name>[2Fe-2S] cluster</name>
        <dbReference type="ChEBI" id="CHEBI:190135"/>
    </ligand>
</feature>
<feature type="binding site" evidence="1">
    <location>
        <position position="234"/>
    </location>
    <ligand>
        <name>[2Fe-2S] cluster</name>
        <dbReference type="ChEBI" id="CHEBI:190135"/>
    </ligand>
</feature>
<feature type="binding site" evidence="1">
    <location>
        <position position="249"/>
    </location>
    <ligand>
        <name>[2Fe-2S] cluster</name>
        <dbReference type="ChEBI" id="CHEBI:190135"/>
    </ligand>
</feature>
<feature type="strand" evidence="2">
    <location>
        <begin position="5"/>
        <end position="17"/>
    </location>
</feature>
<feature type="strand" evidence="2">
    <location>
        <begin position="20"/>
        <end position="27"/>
    </location>
</feature>
<feature type="helix" evidence="2">
    <location>
        <begin position="28"/>
        <end position="32"/>
    </location>
</feature>
<feature type="strand" evidence="2">
    <location>
        <begin position="39"/>
        <end position="42"/>
    </location>
</feature>
<feature type="strand" evidence="2">
    <location>
        <begin position="53"/>
        <end position="56"/>
    </location>
</feature>
<feature type="strand" evidence="2">
    <location>
        <begin position="59"/>
        <end position="61"/>
    </location>
</feature>
<feature type="turn" evidence="2">
    <location>
        <begin position="62"/>
        <end position="65"/>
    </location>
</feature>
<feature type="strand" evidence="2">
    <location>
        <begin position="66"/>
        <end position="72"/>
    </location>
</feature>
<feature type="helix" evidence="2">
    <location>
        <begin position="79"/>
        <end position="84"/>
    </location>
</feature>
<feature type="strand" evidence="2">
    <location>
        <begin position="91"/>
        <end position="100"/>
    </location>
</feature>
<feature type="strand" evidence="2">
    <location>
        <begin position="112"/>
        <end position="118"/>
    </location>
</feature>
<feature type="helix" evidence="2">
    <location>
        <begin position="119"/>
        <end position="121"/>
    </location>
</feature>
<feature type="helix" evidence="2">
    <location>
        <begin position="123"/>
        <end position="134"/>
    </location>
</feature>
<feature type="strand" evidence="2">
    <location>
        <begin position="138"/>
        <end position="146"/>
    </location>
</feature>
<feature type="helix" evidence="2">
    <location>
        <begin position="148"/>
        <end position="150"/>
    </location>
</feature>
<feature type="helix" evidence="2">
    <location>
        <begin position="154"/>
        <end position="158"/>
    </location>
</feature>
<feature type="strand" evidence="2">
    <location>
        <begin position="160"/>
        <end position="169"/>
    </location>
</feature>
<feature type="strand" evidence="2">
    <location>
        <begin position="172"/>
        <end position="178"/>
    </location>
</feature>
<feature type="helix" evidence="2">
    <location>
        <begin position="180"/>
        <end position="185"/>
    </location>
</feature>
<feature type="strand" evidence="2">
    <location>
        <begin position="192"/>
        <end position="198"/>
    </location>
</feature>
<feature type="helix" evidence="2">
    <location>
        <begin position="200"/>
        <end position="209"/>
    </location>
</feature>
<feature type="turn" evidence="2">
    <location>
        <begin position="210"/>
        <end position="212"/>
    </location>
</feature>
<feature type="strand" evidence="2">
    <location>
        <begin position="214"/>
        <end position="219"/>
    </location>
</feature>
<feature type="strand" evidence="2">
    <location>
        <begin position="225"/>
        <end position="231"/>
    </location>
</feature>
<feature type="strand" evidence="2">
    <location>
        <begin position="235"/>
        <end position="237"/>
    </location>
</feature>
<feature type="strand" evidence="2">
    <location>
        <begin position="239"/>
        <end position="243"/>
    </location>
</feature>
<feature type="strand" evidence="2">
    <location>
        <begin position="245"/>
        <end position="247"/>
    </location>
</feature>
<feature type="turn" evidence="2">
    <location>
        <begin position="248"/>
        <end position="251"/>
    </location>
</feature>
<feature type="strand" evidence="2">
    <location>
        <begin position="253"/>
        <end position="256"/>
    </location>
</feature>
<feature type="helix" evidence="2">
    <location>
        <begin position="257"/>
        <end position="259"/>
    </location>
</feature>
<organism>
    <name type="scientific">Lactococcus lactis subsp. lactis (strain IL1403)</name>
    <name type="common">Streptococcus lactis</name>
    <dbReference type="NCBI Taxonomy" id="272623"/>
    <lineage>
        <taxon>Bacteria</taxon>
        <taxon>Bacillati</taxon>
        <taxon>Bacillota</taxon>
        <taxon>Bacilli</taxon>
        <taxon>Lactobacillales</taxon>
        <taxon>Streptococcaceae</taxon>
        <taxon>Lactococcus</taxon>
    </lineage>
</organism>
<protein>
    <recommendedName>
        <fullName evidence="1">Dihydroorotate dehydrogenase B (NAD(+)), electron transfer subunit</fullName>
    </recommendedName>
    <alternativeName>
        <fullName evidence="1">Dihydroorotate oxidase B, electron transfer subunit</fullName>
    </alternativeName>
</protein>
<keyword id="KW-0001">2Fe-2S</keyword>
<keyword id="KW-0002">3D-structure</keyword>
<keyword id="KW-0249">Electron transport</keyword>
<keyword id="KW-0274">FAD</keyword>
<keyword id="KW-0285">Flavoprotein</keyword>
<keyword id="KW-0408">Iron</keyword>
<keyword id="KW-0411">Iron-sulfur</keyword>
<keyword id="KW-0479">Metal-binding</keyword>
<keyword id="KW-0665">Pyrimidine biosynthesis</keyword>
<keyword id="KW-1185">Reference proteome</keyword>
<keyword id="KW-0813">Transport</keyword>